<protein>
    <recommendedName>
        <fullName evidence="1">Thiamine-phosphate synthase</fullName>
        <shortName evidence="1">TP synthase</shortName>
        <shortName evidence="1">TPS</shortName>
        <ecNumber evidence="1">2.5.1.3</ecNumber>
    </recommendedName>
    <alternativeName>
        <fullName evidence="1">Thiamine-phosphate pyrophosphorylase</fullName>
        <shortName evidence="1">TMP pyrophosphorylase</shortName>
        <shortName evidence="1">TMP-PPase</shortName>
    </alternativeName>
</protein>
<evidence type="ECO:0000255" key="1">
    <source>
        <dbReference type="HAMAP-Rule" id="MF_00097"/>
    </source>
</evidence>
<accession>Q6GEY4</accession>
<name>THIE_STAAR</name>
<dbReference type="EC" id="2.5.1.3" evidence="1"/>
<dbReference type="EMBL" id="BX571856">
    <property type="protein sequence ID" value="CAG41160.1"/>
    <property type="molecule type" value="Genomic_DNA"/>
</dbReference>
<dbReference type="RefSeq" id="WP_000483150.1">
    <property type="nucleotide sequence ID" value="NC_002952.2"/>
</dbReference>
<dbReference type="SMR" id="Q6GEY4"/>
<dbReference type="KEGG" id="sar:SAR2180"/>
<dbReference type="HOGENOM" id="CLU_018272_3_2_9"/>
<dbReference type="UniPathway" id="UPA00060">
    <property type="reaction ID" value="UER00141"/>
</dbReference>
<dbReference type="Proteomes" id="UP000000596">
    <property type="component" value="Chromosome"/>
</dbReference>
<dbReference type="GO" id="GO:0005737">
    <property type="term" value="C:cytoplasm"/>
    <property type="evidence" value="ECO:0007669"/>
    <property type="project" value="TreeGrafter"/>
</dbReference>
<dbReference type="GO" id="GO:0000287">
    <property type="term" value="F:magnesium ion binding"/>
    <property type="evidence" value="ECO:0007669"/>
    <property type="project" value="UniProtKB-UniRule"/>
</dbReference>
<dbReference type="GO" id="GO:0004789">
    <property type="term" value="F:thiamine-phosphate diphosphorylase activity"/>
    <property type="evidence" value="ECO:0007669"/>
    <property type="project" value="UniProtKB-UniRule"/>
</dbReference>
<dbReference type="GO" id="GO:0009228">
    <property type="term" value="P:thiamine biosynthetic process"/>
    <property type="evidence" value="ECO:0007669"/>
    <property type="project" value="UniProtKB-KW"/>
</dbReference>
<dbReference type="GO" id="GO:0009229">
    <property type="term" value="P:thiamine diphosphate biosynthetic process"/>
    <property type="evidence" value="ECO:0007669"/>
    <property type="project" value="UniProtKB-UniRule"/>
</dbReference>
<dbReference type="CDD" id="cd00564">
    <property type="entry name" value="TMP_TenI"/>
    <property type="match status" value="1"/>
</dbReference>
<dbReference type="FunFam" id="3.20.20.70:FF:000096">
    <property type="entry name" value="Thiamine-phosphate synthase"/>
    <property type="match status" value="1"/>
</dbReference>
<dbReference type="Gene3D" id="3.20.20.70">
    <property type="entry name" value="Aldolase class I"/>
    <property type="match status" value="1"/>
</dbReference>
<dbReference type="HAMAP" id="MF_00097">
    <property type="entry name" value="TMP_synthase"/>
    <property type="match status" value="1"/>
</dbReference>
<dbReference type="InterPro" id="IPR013785">
    <property type="entry name" value="Aldolase_TIM"/>
</dbReference>
<dbReference type="InterPro" id="IPR036206">
    <property type="entry name" value="ThiamineP_synth_sf"/>
</dbReference>
<dbReference type="InterPro" id="IPR022998">
    <property type="entry name" value="ThiamineP_synth_TenI"/>
</dbReference>
<dbReference type="InterPro" id="IPR034291">
    <property type="entry name" value="TMP_synthase"/>
</dbReference>
<dbReference type="NCBIfam" id="TIGR00693">
    <property type="entry name" value="thiE"/>
    <property type="match status" value="1"/>
</dbReference>
<dbReference type="PANTHER" id="PTHR20857">
    <property type="entry name" value="THIAMINE-PHOSPHATE PYROPHOSPHORYLASE"/>
    <property type="match status" value="1"/>
</dbReference>
<dbReference type="PANTHER" id="PTHR20857:SF15">
    <property type="entry name" value="THIAMINE-PHOSPHATE SYNTHASE"/>
    <property type="match status" value="1"/>
</dbReference>
<dbReference type="Pfam" id="PF02581">
    <property type="entry name" value="TMP-TENI"/>
    <property type="match status" value="1"/>
</dbReference>
<dbReference type="SUPFAM" id="SSF51391">
    <property type="entry name" value="Thiamin phosphate synthase"/>
    <property type="match status" value="1"/>
</dbReference>
<gene>
    <name evidence="1" type="primary">thiE</name>
    <name type="ordered locus">SAR2180</name>
</gene>
<keyword id="KW-0460">Magnesium</keyword>
<keyword id="KW-0479">Metal-binding</keyword>
<keyword id="KW-0784">Thiamine biosynthesis</keyword>
<keyword id="KW-0808">Transferase</keyword>
<reference key="1">
    <citation type="journal article" date="2004" name="Proc. Natl. Acad. Sci. U.S.A.">
        <title>Complete genomes of two clinical Staphylococcus aureus strains: evidence for the rapid evolution of virulence and drug resistance.</title>
        <authorList>
            <person name="Holden M.T.G."/>
            <person name="Feil E.J."/>
            <person name="Lindsay J.A."/>
            <person name="Peacock S.J."/>
            <person name="Day N.P.J."/>
            <person name="Enright M.C."/>
            <person name="Foster T.J."/>
            <person name="Moore C.E."/>
            <person name="Hurst L."/>
            <person name="Atkin R."/>
            <person name="Barron A."/>
            <person name="Bason N."/>
            <person name="Bentley S.D."/>
            <person name="Chillingworth C."/>
            <person name="Chillingworth T."/>
            <person name="Churcher C."/>
            <person name="Clark L."/>
            <person name="Corton C."/>
            <person name="Cronin A."/>
            <person name="Doggett J."/>
            <person name="Dowd L."/>
            <person name="Feltwell T."/>
            <person name="Hance Z."/>
            <person name="Harris B."/>
            <person name="Hauser H."/>
            <person name="Holroyd S."/>
            <person name="Jagels K."/>
            <person name="James K.D."/>
            <person name="Lennard N."/>
            <person name="Line A."/>
            <person name="Mayes R."/>
            <person name="Moule S."/>
            <person name="Mungall K."/>
            <person name="Ormond D."/>
            <person name="Quail M.A."/>
            <person name="Rabbinowitsch E."/>
            <person name="Rutherford K.M."/>
            <person name="Sanders M."/>
            <person name="Sharp S."/>
            <person name="Simmonds M."/>
            <person name="Stevens K."/>
            <person name="Whitehead S."/>
            <person name="Barrell B.G."/>
            <person name="Spratt B.G."/>
            <person name="Parkhill J."/>
        </authorList>
    </citation>
    <scope>NUCLEOTIDE SEQUENCE [LARGE SCALE GENOMIC DNA]</scope>
    <source>
        <strain>MRSA252</strain>
    </source>
</reference>
<organism>
    <name type="scientific">Staphylococcus aureus (strain MRSA252)</name>
    <dbReference type="NCBI Taxonomy" id="282458"/>
    <lineage>
        <taxon>Bacteria</taxon>
        <taxon>Bacillati</taxon>
        <taxon>Bacillota</taxon>
        <taxon>Bacilli</taxon>
        <taxon>Bacillales</taxon>
        <taxon>Staphylococcaceae</taxon>
        <taxon>Staphylococcus</taxon>
    </lineage>
</organism>
<feature type="chain" id="PRO_0000157045" description="Thiamine-phosphate synthase">
    <location>
        <begin position="1"/>
        <end position="213"/>
    </location>
</feature>
<feature type="binding site" evidence="1">
    <location>
        <begin position="40"/>
        <end position="44"/>
    </location>
    <ligand>
        <name>4-amino-2-methyl-5-(diphosphooxymethyl)pyrimidine</name>
        <dbReference type="ChEBI" id="CHEBI:57841"/>
    </ligand>
</feature>
<feature type="binding site" evidence="1">
    <location>
        <position position="75"/>
    </location>
    <ligand>
        <name>4-amino-2-methyl-5-(diphosphooxymethyl)pyrimidine</name>
        <dbReference type="ChEBI" id="CHEBI:57841"/>
    </ligand>
</feature>
<feature type="binding site" evidence="1">
    <location>
        <position position="76"/>
    </location>
    <ligand>
        <name>Mg(2+)</name>
        <dbReference type="ChEBI" id="CHEBI:18420"/>
    </ligand>
</feature>
<feature type="binding site" evidence="1">
    <location>
        <position position="95"/>
    </location>
    <ligand>
        <name>Mg(2+)</name>
        <dbReference type="ChEBI" id="CHEBI:18420"/>
    </ligand>
</feature>
<feature type="binding site" evidence="1">
    <location>
        <position position="113"/>
    </location>
    <ligand>
        <name>4-amino-2-methyl-5-(diphosphooxymethyl)pyrimidine</name>
        <dbReference type="ChEBI" id="CHEBI:57841"/>
    </ligand>
</feature>
<feature type="binding site" evidence="1">
    <location>
        <begin position="139"/>
        <end position="141"/>
    </location>
    <ligand>
        <name>2-[(2R,5Z)-2-carboxy-4-methylthiazol-5(2H)-ylidene]ethyl phosphate</name>
        <dbReference type="ChEBI" id="CHEBI:62899"/>
    </ligand>
</feature>
<feature type="binding site" evidence="1">
    <location>
        <position position="142"/>
    </location>
    <ligand>
        <name>4-amino-2-methyl-5-(diphosphooxymethyl)pyrimidine</name>
        <dbReference type="ChEBI" id="CHEBI:57841"/>
    </ligand>
</feature>
<feature type="binding site" evidence="1">
    <location>
        <position position="171"/>
    </location>
    <ligand>
        <name>2-[(2R,5Z)-2-carboxy-4-methylthiazol-5(2H)-ylidene]ethyl phosphate</name>
        <dbReference type="ChEBI" id="CHEBI:62899"/>
    </ligand>
</feature>
<feature type="binding site" evidence="1">
    <location>
        <begin position="191"/>
        <end position="192"/>
    </location>
    <ligand>
        <name>2-[(2R,5Z)-2-carboxy-4-methylthiazol-5(2H)-ylidene]ethyl phosphate</name>
        <dbReference type="ChEBI" id="CHEBI:62899"/>
    </ligand>
</feature>
<proteinExistence type="inferred from homology"/>
<sequence>MFNQSYLNVYFICGTSDVPSHRTIHEVLEAALKAGITLFQFREKGESALKGNDKLVLAKELQHLCHQYDVPFIVNDDVSLAKEINADGIHVGQDDAKVKEIAQYFTDKIIGFSISDLDEYAKSDLTHVDYIGVGPIYPTPSKHDAHTPVGPEMIATFKEMNPQLPIVAIGGINTSNVAPIVEAGANGISVISAISKSENIEKTVNRFKDFFNN</sequence>
<comment type="function">
    <text evidence="1">Condenses 4-methyl-5-(beta-hydroxyethyl)thiazole monophosphate (THZ-P) and 2-methyl-4-amino-5-hydroxymethyl pyrimidine pyrophosphate (HMP-PP) to form thiamine monophosphate (TMP).</text>
</comment>
<comment type="catalytic activity">
    <reaction evidence="1">
        <text>2-[(2R,5Z)-2-carboxy-4-methylthiazol-5(2H)-ylidene]ethyl phosphate + 4-amino-2-methyl-5-(diphosphooxymethyl)pyrimidine + 2 H(+) = thiamine phosphate + CO2 + diphosphate</text>
        <dbReference type="Rhea" id="RHEA:47844"/>
        <dbReference type="ChEBI" id="CHEBI:15378"/>
        <dbReference type="ChEBI" id="CHEBI:16526"/>
        <dbReference type="ChEBI" id="CHEBI:33019"/>
        <dbReference type="ChEBI" id="CHEBI:37575"/>
        <dbReference type="ChEBI" id="CHEBI:57841"/>
        <dbReference type="ChEBI" id="CHEBI:62899"/>
        <dbReference type="EC" id="2.5.1.3"/>
    </reaction>
</comment>
<comment type="catalytic activity">
    <reaction evidence="1">
        <text>2-(2-carboxy-4-methylthiazol-5-yl)ethyl phosphate + 4-amino-2-methyl-5-(diphosphooxymethyl)pyrimidine + 2 H(+) = thiamine phosphate + CO2 + diphosphate</text>
        <dbReference type="Rhea" id="RHEA:47848"/>
        <dbReference type="ChEBI" id="CHEBI:15378"/>
        <dbReference type="ChEBI" id="CHEBI:16526"/>
        <dbReference type="ChEBI" id="CHEBI:33019"/>
        <dbReference type="ChEBI" id="CHEBI:37575"/>
        <dbReference type="ChEBI" id="CHEBI:57841"/>
        <dbReference type="ChEBI" id="CHEBI:62890"/>
        <dbReference type="EC" id="2.5.1.3"/>
    </reaction>
</comment>
<comment type="catalytic activity">
    <reaction evidence="1">
        <text>4-methyl-5-(2-phosphooxyethyl)-thiazole + 4-amino-2-methyl-5-(diphosphooxymethyl)pyrimidine + H(+) = thiamine phosphate + diphosphate</text>
        <dbReference type="Rhea" id="RHEA:22328"/>
        <dbReference type="ChEBI" id="CHEBI:15378"/>
        <dbReference type="ChEBI" id="CHEBI:33019"/>
        <dbReference type="ChEBI" id="CHEBI:37575"/>
        <dbReference type="ChEBI" id="CHEBI:57841"/>
        <dbReference type="ChEBI" id="CHEBI:58296"/>
        <dbReference type="EC" id="2.5.1.3"/>
    </reaction>
</comment>
<comment type="cofactor">
    <cofactor evidence="1">
        <name>Mg(2+)</name>
        <dbReference type="ChEBI" id="CHEBI:18420"/>
    </cofactor>
    <text evidence="1">Binds 1 Mg(2+) ion per subunit.</text>
</comment>
<comment type="pathway">
    <text evidence="1">Cofactor biosynthesis; thiamine diphosphate biosynthesis; thiamine phosphate from 4-amino-2-methyl-5-diphosphomethylpyrimidine and 4-methyl-5-(2-phosphoethyl)-thiazole: step 1/1.</text>
</comment>
<comment type="similarity">
    <text evidence="1">Belongs to the thiamine-phosphate synthase family.</text>
</comment>